<evidence type="ECO:0000255" key="1">
    <source>
        <dbReference type="HAMAP-Rule" id="MF_00451"/>
    </source>
</evidence>
<sequence>MSEEAPVHERTFVMVKPDGVQRGLIGEIISRFEDRGLTLVGGKFTRLDTEVARDHYGEHKDKPFFDDLVSFITAGPVFAMVWEGADATRQVRSMVGETDPAESAPGTIRGDYGLDLGRNVIHASDHEDEGANEREIQLFFDESELYTYERIDDPWLYE</sequence>
<keyword id="KW-0067">ATP-binding</keyword>
<keyword id="KW-0963">Cytoplasm</keyword>
<keyword id="KW-0418">Kinase</keyword>
<keyword id="KW-0460">Magnesium</keyword>
<keyword id="KW-0479">Metal-binding</keyword>
<keyword id="KW-0546">Nucleotide metabolism</keyword>
<keyword id="KW-0547">Nucleotide-binding</keyword>
<keyword id="KW-0597">Phosphoprotein</keyword>
<keyword id="KW-1185">Reference proteome</keyword>
<keyword id="KW-0808">Transferase</keyword>
<comment type="function">
    <text evidence="1">Major role in the synthesis of nucleoside triphosphates other than ATP. The ATP gamma phosphate is transferred to the NDP beta phosphate via a ping-pong mechanism, using a phosphorylated active-site intermediate.</text>
</comment>
<comment type="catalytic activity">
    <reaction evidence="1">
        <text>a 2'-deoxyribonucleoside 5'-diphosphate + ATP = a 2'-deoxyribonucleoside 5'-triphosphate + ADP</text>
        <dbReference type="Rhea" id="RHEA:44640"/>
        <dbReference type="ChEBI" id="CHEBI:30616"/>
        <dbReference type="ChEBI" id="CHEBI:61560"/>
        <dbReference type="ChEBI" id="CHEBI:73316"/>
        <dbReference type="ChEBI" id="CHEBI:456216"/>
        <dbReference type="EC" id="2.7.4.6"/>
    </reaction>
</comment>
<comment type="catalytic activity">
    <reaction evidence="1">
        <text>a ribonucleoside 5'-diphosphate + ATP = a ribonucleoside 5'-triphosphate + ADP</text>
        <dbReference type="Rhea" id="RHEA:18113"/>
        <dbReference type="ChEBI" id="CHEBI:30616"/>
        <dbReference type="ChEBI" id="CHEBI:57930"/>
        <dbReference type="ChEBI" id="CHEBI:61557"/>
        <dbReference type="ChEBI" id="CHEBI:456216"/>
        <dbReference type="EC" id="2.7.4.6"/>
    </reaction>
</comment>
<comment type="cofactor">
    <cofactor evidence="1">
        <name>Mg(2+)</name>
        <dbReference type="ChEBI" id="CHEBI:18420"/>
    </cofactor>
</comment>
<comment type="subcellular location">
    <subcellularLocation>
        <location evidence="1">Cytoplasm</location>
    </subcellularLocation>
</comment>
<comment type="similarity">
    <text evidence="1">Belongs to the NDK family.</text>
</comment>
<gene>
    <name evidence="1" type="primary">ndk</name>
    <name type="ordered locus">HQ_2882A</name>
</gene>
<accession>Q18GB1</accession>
<proteinExistence type="inferred from homology"/>
<dbReference type="EC" id="2.7.4.6" evidence="1"/>
<dbReference type="EMBL" id="AM180088">
    <property type="protein sequence ID" value="CAJ52989.1"/>
    <property type="molecule type" value="Genomic_DNA"/>
</dbReference>
<dbReference type="RefSeq" id="WP_011572100.1">
    <property type="nucleotide sequence ID" value="NC_008212.1"/>
</dbReference>
<dbReference type="SMR" id="Q18GB1"/>
<dbReference type="STRING" id="362976.HQ_2882A"/>
<dbReference type="GeneID" id="4194340"/>
<dbReference type="KEGG" id="hwa:HQ_2882A"/>
<dbReference type="eggNOG" id="arCOG04313">
    <property type="taxonomic scope" value="Archaea"/>
</dbReference>
<dbReference type="HOGENOM" id="CLU_060216_6_3_2"/>
<dbReference type="Proteomes" id="UP000001975">
    <property type="component" value="Chromosome"/>
</dbReference>
<dbReference type="GO" id="GO:0005737">
    <property type="term" value="C:cytoplasm"/>
    <property type="evidence" value="ECO:0007669"/>
    <property type="project" value="UniProtKB-SubCell"/>
</dbReference>
<dbReference type="GO" id="GO:0005524">
    <property type="term" value="F:ATP binding"/>
    <property type="evidence" value="ECO:0007669"/>
    <property type="project" value="UniProtKB-UniRule"/>
</dbReference>
<dbReference type="GO" id="GO:0046872">
    <property type="term" value="F:metal ion binding"/>
    <property type="evidence" value="ECO:0007669"/>
    <property type="project" value="UniProtKB-KW"/>
</dbReference>
<dbReference type="GO" id="GO:0004550">
    <property type="term" value="F:nucleoside diphosphate kinase activity"/>
    <property type="evidence" value="ECO:0007669"/>
    <property type="project" value="UniProtKB-UniRule"/>
</dbReference>
<dbReference type="GO" id="GO:0006241">
    <property type="term" value="P:CTP biosynthetic process"/>
    <property type="evidence" value="ECO:0007669"/>
    <property type="project" value="UniProtKB-UniRule"/>
</dbReference>
<dbReference type="GO" id="GO:0006183">
    <property type="term" value="P:GTP biosynthetic process"/>
    <property type="evidence" value="ECO:0007669"/>
    <property type="project" value="UniProtKB-UniRule"/>
</dbReference>
<dbReference type="GO" id="GO:0006228">
    <property type="term" value="P:UTP biosynthetic process"/>
    <property type="evidence" value="ECO:0007669"/>
    <property type="project" value="UniProtKB-UniRule"/>
</dbReference>
<dbReference type="CDD" id="cd04413">
    <property type="entry name" value="NDPk_I"/>
    <property type="match status" value="1"/>
</dbReference>
<dbReference type="FunFam" id="3.30.70.141:FF:000002">
    <property type="entry name" value="Nucleoside diphosphate kinase"/>
    <property type="match status" value="1"/>
</dbReference>
<dbReference type="Gene3D" id="3.30.70.141">
    <property type="entry name" value="Nucleoside diphosphate kinase-like domain"/>
    <property type="match status" value="1"/>
</dbReference>
<dbReference type="HAMAP" id="MF_00451">
    <property type="entry name" value="NDP_kinase"/>
    <property type="match status" value="1"/>
</dbReference>
<dbReference type="InterPro" id="IPR034907">
    <property type="entry name" value="NDK-like_dom"/>
</dbReference>
<dbReference type="InterPro" id="IPR036850">
    <property type="entry name" value="NDK-like_dom_sf"/>
</dbReference>
<dbReference type="InterPro" id="IPR001564">
    <property type="entry name" value="Nucleoside_diP_kinase"/>
</dbReference>
<dbReference type="NCBIfam" id="NF001908">
    <property type="entry name" value="PRK00668.1"/>
    <property type="match status" value="1"/>
</dbReference>
<dbReference type="PANTHER" id="PTHR11349">
    <property type="entry name" value="NUCLEOSIDE DIPHOSPHATE KINASE"/>
    <property type="match status" value="1"/>
</dbReference>
<dbReference type="Pfam" id="PF00334">
    <property type="entry name" value="NDK"/>
    <property type="match status" value="1"/>
</dbReference>
<dbReference type="PRINTS" id="PR01243">
    <property type="entry name" value="NUCDPKINASE"/>
</dbReference>
<dbReference type="SMART" id="SM00562">
    <property type="entry name" value="NDK"/>
    <property type="match status" value="1"/>
</dbReference>
<dbReference type="SUPFAM" id="SSF54919">
    <property type="entry name" value="Nucleoside diphosphate kinase, NDK"/>
    <property type="match status" value="1"/>
</dbReference>
<dbReference type="PROSITE" id="PS51374">
    <property type="entry name" value="NDPK_LIKE"/>
    <property type="match status" value="1"/>
</dbReference>
<feature type="chain" id="PRO_0000267811" description="Nucleoside diphosphate kinase">
    <location>
        <begin position="1"/>
        <end position="158"/>
    </location>
</feature>
<feature type="active site" description="Pros-phosphohistidine intermediate" evidence="1">
    <location>
        <position position="122"/>
    </location>
</feature>
<feature type="binding site" evidence="1">
    <location>
        <position position="16"/>
    </location>
    <ligand>
        <name>ATP</name>
        <dbReference type="ChEBI" id="CHEBI:30616"/>
    </ligand>
</feature>
<feature type="binding site" evidence="1">
    <location>
        <position position="64"/>
    </location>
    <ligand>
        <name>ATP</name>
        <dbReference type="ChEBI" id="CHEBI:30616"/>
    </ligand>
</feature>
<feature type="binding site" evidence="1">
    <location>
        <position position="92"/>
    </location>
    <ligand>
        <name>ATP</name>
        <dbReference type="ChEBI" id="CHEBI:30616"/>
    </ligand>
</feature>
<feature type="binding site" evidence="1">
    <location>
        <position position="98"/>
    </location>
    <ligand>
        <name>ATP</name>
        <dbReference type="ChEBI" id="CHEBI:30616"/>
    </ligand>
</feature>
<feature type="binding site" evidence="1">
    <location>
        <position position="109"/>
    </location>
    <ligand>
        <name>ATP</name>
        <dbReference type="ChEBI" id="CHEBI:30616"/>
    </ligand>
</feature>
<feature type="binding site" evidence="1">
    <location>
        <position position="119"/>
    </location>
    <ligand>
        <name>ATP</name>
        <dbReference type="ChEBI" id="CHEBI:30616"/>
    </ligand>
</feature>
<organism>
    <name type="scientific">Haloquadratum walsbyi (strain DSM 16790 / HBSQ001)</name>
    <dbReference type="NCBI Taxonomy" id="362976"/>
    <lineage>
        <taxon>Archaea</taxon>
        <taxon>Methanobacteriati</taxon>
        <taxon>Methanobacteriota</taxon>
        <taxon>Stenosarchaea group</taxon>
        <taxon>Halobacteria</taxon>
        <taxon>Halobacteriales</taxon>
        <taxon>Haloferacaceae</taxon>
        <taxon>Haloquadratum</taxon>
    </lineage>
</organism>
<protein>
    <recommendedName>
        <fullName evidence="1">Nucleoside diphosphate kinase</fullName>
        <shortName evidence="1">NDK</shortName>
        <shortName evidence="1">NDP kinase</shortName>
        <ecNumber evidence="1">2.7.4.6</ecNumber>
    </recommendedName>
    <alternativeName>
        <fullName evidence="1">Nucleoside-2-P kinase</fullName>
    </alternativeName>
</protein>
<name>NDK_HALWD</name>
<reference key="1">
    <citation type="journal article" date="2006" name="BMC Genomics">
        <title>The genome of the square archaeon Haloquadratum walsbyi: life at the limits of water activity.</title>
        <authorList>
            <person name="Bolhuis H."/>
            <person name="Palm P."/>
            <person name="Wende A."/>
            <person name="Falb M."/>
            <person name="Rampp M."/>
            <person name="Rodriguez-Valera F."/>
            <person name="Pfeiffer F."/>
            <person name="Oesterhelt D."/>
        </authorList>
    </citation>
    <scope>NUCLEOTIDE SEQUENCE [LARGE SCALE GENOMIC DNA]</scope>
    <source>
        <strain>DSM 16790 / HBSQ001</strain>
    </source>
</reference>